<protein>
    <recommendedName>
        <fullName evidence="1">Peptide deformylase-like</fullName>
    </recommendedName>
    <alternativeName>
        <fullName evidence="1">Polypeptide deformylase-like</fullName>
    </alternativeName>
</protein>
<name>DEFL_AGRFC</name>
<organism>
    <name type="scientific">Agrobacterium fabrum (strain C58 / ATCC 33970)</name>
    <name type="common">Agrobacterium tumefaciens (strain C58)</name>
    <dbReference type="NCBI Taxonomy" id="176299"/>
    <lineage>
        <taxon>Bacteria</taxon>
        <taxon>Pseudomonadati</taxon>
        <taxon>Pseudomonadota</taxon>
        <taxon>Alphaproteobacteria</taxon>
        <taxon>Hyphomicrobiales</taxon>
        <taxon>Rhizobiaceae</taxon>
        <taxon>Rhizobium/Agrobacterium group</taxon>
        <taxon>Agrobacterium</taxon>
        <taxon>Agrobacterium tumefaciens complex</taxon>
    </lineage>
</organism>
<feature type="chain" id="PRO_0000082890" description="Peptide deformylase-like">
    <location>
        <begin position="1"/>
        <end position="164"/>
    </location>
</feature>
<feature type="active site" evidence="1">
    <location>
        <position position="133"/>
    </location>
</feature>
<reference key="1">
    <citation type="journal article" date="2001" name="Science">
        <title>The genome of the natural genetic engineer Agrobacterium tumefaciens C58.</title>
        <authorList>
            <person name="Wood D.W."/>
            <person name="Setubal J.C."/>
            <person name="Kaul R."/>
            <person name="Monks D.E."/>
            <person name="Kitajima J.P."/>
            <person name="Okura V.K."/>
            <person name="Zhou Y."/>
            <person name="Chen L."/>
            <person name="Wood G.E."/>
            <person name="Almeida N.F. Jr."/>
            <person name="Woo L."/>
            <person name="Chen Y."/>
            <person name="Paulsen I.T."/>
            <person name="Eisen J.A."/>
            <person name="Karp P.D."/>
            <person name="Bovee D. Sr."/>
            <person name="Chapman P."/>
            <person name="Clendenning J."/>
            <person name="Deatherage G."/>
            <person name="Gillet W."/>
            <person name="Grant C."/>
            <person name="Kutyavin T."/>
            <person name="Levy R."/>
            <person name="Li M.-J."/>
            <person name="McClelland E."/>
            <person name="Palmieri A."/>
            <person name="Raymond C."/>
            <person name="Rouse G."/>
            <person name="Saenphimmachak C."/>
            <person name="Wu Z."/>
            <person name="Romero P."/>
            <person name="Gordon D."/>
            <person name="Zhang S."/>
            <person name="Yoo H."/>
            <person name="Tao Y."/>
            <person name="Biddle P."/>
            <person name="Jung M."/>
            <person name="Krespan W."/>
            <person name="Perry M."/>
            <person name="Gordon-Kamm B."/>
            <person name="Liao L."/>
            <person name="Kim S."/>
            <person name="Hendrick C."/>
            <person name="Zhao Z.-Y."/>
            <person name="Dolan M."/>
            <person name="Chumley F."/>
            <person name="Tingey S.V."/>
            <person name="Tomb J.-F."/>
            <person name="Gordon M.P."/>
            <person name="Olson M.V."/>
            <person name="Nester E.W."/>
        </authorList>
    </citation>
    <scope>NUCLEOTIDE SEQUENCE [LARGE SCALE GENOMIC DNA]</scope>
    <source>
        <strain>C58 / ATCC 33970</strain>
    </source>
</reference>
<reference key="2">
    <citation type="journal article" date="2001" name="Science">
        <title>Genome sequence of the plant pathogen and biotechnology agent Agrobacterium tumefaciens C58.</title>
        <authorList>
            <person name="Goodner B."/>
            <person name="Hinkle G."/>
            <person name="Gattung S."/>
            <person name="Miller N."/>
            <person name="Blanchard M."/>
            <person name="Qurollo B."/>
            <person name="Goldman B.S."/>
            <person name="Cao Y."/>
            <person name="Askenazi M."/>
            <person name="Halling C."/>
            <person name="Mullin L."/>
            <person name="Houmiel K."/>
            <person name="Gordon J."/>
            <person name="Vaudin M."/>
            <person name="Iartchouk O."/>
            <person name="Epp A."/>
            <person name="Liu F."/>
            <person name="Wollam C."/>
            <person name="Allinger M."/>
            <person name="Doughty D."/>
            <person name="Scott C."/>
            <person name="Lappas C."/>
            <person name="Markelz B."/>
            <person name="Flanagan C."/>
            <person name="Crowell C."/>
            <person name="Gurson J."/>
            <person name="Lomo C."/>
            <person name="Sear C."/>
            <person name="Strub G."/>
            <person name="Cielo C."/>
            <person name="Slater S."/>
        </authorList>
    </citation>
    <scope>NUCLEOTIDE SEQUENCE [LARGE SCALE GENOMIC DNA]</scope>
    <source>
        <strain>C58 / ATCC 33970</strain>
    </source>
</reference>
<comment type="similarity">
    <text evidence="1">Belongs to the polypeptide deformylase family.</text>
</comment>
<evidence type="ECO:0000255" key="1">
    <source>
        <dbReference type="HAMAP-Rule" id="MF_00163"/>
    </source>
</evidence>
<proteinExistence type="inferred from homology"/>
<gene>
    <name type="ordered locus">Atu1550</name>
    <name type="ORF">AGR_C_2856</name>
</gene>
<keyword id="KW-1185">Reference proteome</keyword>
<sequence>MAIRPILPYPHAGLSGICAPVTVFDDHLRELVTDLIDTMRAAPGVGITAAHIGVLQRVFVLELTPGTILTYINPEITSHSPQTMRHVEGSVSMPGFTDEVERPSTVEVRFQDITGAEQTETAEGFHAICIQHEIDQLDGIFWLKRLSRLKRDRLVKKWEKSRNP</sequence>
<accession>Q8UF49</accession>
<dbReference type="EMBL" id="AE007869">
    <property type="protein sequence ID" value="AAK87337.1"/>
    <property type="molecule type" value="Genomic_DNA"/>
</dbReference>
<dbReference type="PIR" id="AE2767">
    <property type="entry name" value="AE2767"/>
</dbReference>
<dbReference type="PIR" id="H97547">
    <property type="entry name" value="H97547"/>
</dbReference>
<dbReference type="RefSeq" id="NP_354552.1">
    <property type="nucleotide sequence ID" value="NC_003062.2"/>
</dbReference>
<dbReference type="RefSeq" id="WP_010971705.1">
    <property type="nucleotide sequence ID" value="NC_003062.2"/>
</dbReference>
<dbReference type="SMR" id="Q8UF49"/>
<dbReference type="STRING" id="176299.Atu1550"/>
<dbReference type="EnsemblBacteria" id="AAK87337">
    <property type="protein sequence ID" value="AAK87337"/>
    <property type="gene ID" value="Atu1550"/>
</dbReference>
<dbReference type="GeneID" id="1133588"/>
<dbReference type="KEGG" id="atu:Atu1550"/>
<dbReference type="PATRIC" id="fig|176299.10.peg.1575"/>
<dbReference type="eggNOG" id="COG0242">
    <property type="taxonomic scope" value="Bacteria"/>
</dbReference>
<dbReference type="HOGENOM" id="CLU_061901_2_0_5"/>
<dbReference type="OrthoDB" id="9804313at2"/>
<dbReference type="PhylomeDB" id="Q8UF49"/>
<dbReference type="BioCyc" id="AGRO:ATU1550-MONOMER"/>
<dbReference type="Proteomes" id="UP000000813">
    <property type="component" value="Chromosome circular"/>
</dbReference>
<dbReference type="GO" id="GO:0042586">
    <property type="term" value="F:peptide deformylase activity"/>
    <property type="evidence" value="ECO:0007669"/>
    <property type="project" value="UniProtKB-UniRule"/>
</dbReference>
<dbReference type="GO" id="GO:0043686">
    <property type="term" value="P:co-translational protein modification"/>
    <property type="evidence" value="ECO:0007669"/>
    <property type="project" value="TreeGrafter"/>
</dbReference>
<dbReference type="GO" id="GO:0006412">
    <property type="term" value="P:translation"/>
    <property type="evidence" value="ECO:0007669"/>
    <property type="project" value="UniProtKB-UniRule"/>
</dbReference>
<dbReference type="CDD" id="cd00487">
    <property type="entry name" value="Pep_deformylase"/>
    <property type="match status" value="1"/>
</dbReference>
<dbReference type="Gene3D" id="3.90.45.10">
    <property type="entry name" value="Peptide deformylase"/>
    <property type="match status" value="1"/>
</dbReference>
<dbReference type="HAMAP" id="MF_00163">
    <property type="entry name" value="Pep_deformylase"/>
    <property type="match status" value="1"/>
</dbReference>
<dbReference type="InterPro" id="IPR023635">
    <property type="entry name" value="Peptide_deformylase"/>
</dbReference>
<dbReference type="InterPro" id="IPR036821">
    <property type="entry name" value="Peptide_deformylase_sf"/>
</dbReference>
<dbReference type="NCBIfam" id="TIGR00079">
    <property type="entry name" value="pept_deformyl"/>
    <property type="match status" value="1"/>
</dbReference>
<dbReference type="NCBIfam" id="NF009484">
    <property type="entry name" value="PRK12846.1-5"/>
    <property type="match status" value="1"/>
</dbReference>
<dbReference type="PANTHER" id="PTHR10458">
    <property type="entry name" value="PEPTIDE DEFORMYLASE"/>
    <property type="match status" value="1"/>
</dbReference>
<dbReference type="PANTHER" id="PTHR10458:SF22">
    <property type="entry name" value="PEPTIDE DEFORMYLASE"/>
    <property type="match status" value="1"/>
</dbReference>
<dbReference type="Pfam" id="PF01327">
    <property type="entry name" value="Pep_deformylase"/>
    <property type="match status" value="1"/>
</dbReference>
<dbReference type="PIRSF" id="PIRSF004749">
    <property type="entry name" value="Pep_def"/>
    <property type="match status" value="1"/>
</dbReference>
<dbReference type="PRINTS" id="PR01576">
    <property type="entry name" value="PDEFORMYLASE"/>
</dbReference>
<dbReference type="SUPFAM" id="SSF56420">
    <property type="entry name" value="Peptide deformylase"/>
    <property type="match status" value="1"/>
</dbReference>